<dbReference type="EMBL" id="AC156800">
    <property type="status" value="NOT_ANNOTATED_CDS"/>
    <property type="molecule type" value="Genomic_DNA"/>
</dbReference>
<dbReference type="EMBL" id="AC159000">
    <property type="status" value="NOT_ANNOTATED_CDS"/>
    <property type="molecule type" value="Genomic_DNA"/>
</dbReference>
<dbReference type="EMBL" id="AC165257">
    <property type="status" value="NOT_ANNOTATED_CDS"/>
    <property type="molecule type" value="Genomic_DNA"/>
</dbReference>
<dbReference type="EMBL" id="CT486004">
    <property type="status" value="NOT_ANNOTATED_CDS"/>
    <property type="molecule type" value="Genomic_DNA"/>
</dbReference>
<dbReference type="EMBL" id="BC150824">
    <property type="protein sequence ID" value="AAI50825.1"/>
    <property type="molecule type" value="mRNA"/>
</dbReference>
<dbReference type="CCDS" id="CCDS23604.1"/>
<dbReference type="RefSeq" id="NP_598482.2">
    <property type="nucleotide sequence ID" value="NM_133721.2"/>
</dbReference>
<dbReference type="SMR" id="B8JK39"/>
<dbReference type="FunCoup" id="B8JK39">
    <property type="interactions" value="676"/>
</dbReference>
<dbReference type="STRING" id="10090.ENSMUSP00000044227"/>
<dbReference type="GlyCosmos" id="B8JK39">
    <property type="glycosylation" value="4 sites, No reported glycans"/>
</dbReference>
<dbReference type="GlyGen" id="B8JK39">
    <property type="glycosylation" value="8 sites, 3 N-linked glycans (5 sites)"/>
</dbReference>
<dbReference type="iPTMnet" id="B8JK39"/>
<dbReference type="PhosphoSitePlus" id="B8JK39"/>
<dbReference type="PaxDb" id="10090-ENSMUSP00000044227"/>
<dbReference type="PeptideAtlas" id="B8JK39"/>
<dbReference type="ProteomicsDB" id="301688"/>
<dbReference type="Antibodypedia" id="11893">
    <property type="antibodies" value="222 antibodies from 32 providers"/>
</dbReference>
<dbReference type="DNASU" id="104099"/>
<dbReference type="Ensembl" id="ENSMUST00000044165.14">
    <property type="protein sequence ID" value="ENSMUSP00000044227.8"/>
    <property type="gene ID" value="ENSMUSG00000039115.14"/>
</dbReference>
<dbReference type="GeneID" id="104099"/>
<dbReference type="KEGG" id="mmu:104099"/>
<dbReference type="UCSC" id="uc009rzw.2">
    <property type="organism name" value="mouse"/>
</dbReference>
<dbReference type="AGR" id="MGI:104756"/>
<dbReference type="CTD" id="3680"/>
<dbReference type="MGI" id="MGI:104756">
    <property type="gene designation" value="Itga9"/>
</dbReference>
<dbReference type="VEuPathDB" id="HostDB:ENSMUSG00000039115"/>
<dbReference type="eggNOG" id="KOG3637">
    <property type="taxonomic scope" value="Eukaryota"/>
</dbReference>
<dbReference type="GeneTree" id="ENSGT00940000156503"/>
<dbReference type="HOGENOM" id="CLU_004111_5_0_1"/>
<dbReference type="InParanoid" id="B8JK39"/>
<dbReference type="OMA" id="MMRKGMA"/>
<dbReference type="OrthoDB" id="5317514at2759"/>
<dbReference type="PhylomeDB" id="B8JK39"/>
<dbReference type="TreeFam" id="TF105391"/>
<dbReference type="Reactome" id="R-MMU-216083">
    <property type="pathway name" value="Integrin cell surface interactions"/>
</dbReference>
<dbReference type="Reactome" id="R-MMU-3000178">
    <property type="pathway name" value="ECM proteoglycans"/>
</dbReference>
<dbReference type="Reactome" id="R-MMU-445144">
    <property type="pathway name" value="Signal transduction by L1"/>
</dbReference>
<dbReference type="BioGRID-ORCS" id="104099">
    <property type="hits" value="0 hits in 74 CRISPR screens"/>
</dbReference>
<dbReference type="ChiTaRS" id="Itga9">
    <property type="organism name" value="mouse"/>
</dbReference>
<dbReference type="PRO" id="PR:B8JK39"/>
<dbReference type="Proteomes" id="UP000000589">
    <property type="component" value="Chromosome 9"/>
</dbReference>
<dbReference type="RNAct" id="B8JK39">
    <property type="molecule type" value="protein"/>
</dbReference>
<dbReference type="Bgee" id="ENSMUSG00000039115">
    <property type="expression patterns" value="Expressed in animal zygote and 243 other cell types or tissues"/>
</dbReference>
<dbReference type="ExpressionAtlas" id="B8JK39">
    <property type="expression patterns" value="baseline and differential"/>
</dbReference>
<dbReference type="GO" id="GO:0009925">
    <property type="term" value="C:basal plasma membrane"/>
    <property type="evidence" value="ECO:0000314"/>
    <property type="project" value="MGI"/>
</dbReference>
<dbReference type="GO" id="GO:0034679">
    <property type="term" value="C:integrin alpha9-beta1 complex"/>
    <property type="evidence" value="ECO:0000314"/>
    <property type="project" value="UniProtKB"/>
</dbReference>
<dbReference type="GO" id="GO:0005518">
    <property type="term" value="F:collagen binding"/>
    <property type="evidence" value="ECO:0007669"/>
    <property type="project" value="Ensembl"/>
</dbReference>
<dbReference type="GO" id="GO:0098640">
    <property type="term" value="F:integrin binding involved in cell-matrix adhesion"/>
    <property type="evidence" value="ECO:0000314"/>
    <property type="project" value="UniProtKB"/>
</dbReference>
<dbReference type="GO" id="GO:0043236">
    <property type="term" value="F:laminin binding"/>
    <property type="evidence" value="ECO:0007669"/>
    <property type="project" value="Ensembl"/>
</dbReference>
<dbReference type="GO" id="GO:0046872">
    <property type="term" value="F:metal ion binding"/>
    <property type="evidence" value="ECO:0007669"/>
    <property type="project" value="UniProtKB-KW"/>
</dbReference>
<dbReference type="GO" id="GO:0007155">
    <property type="term" value="P:cell adhesion"/>
    <property type="evidence" value="ECO:0000266"/>
    <property type="project" value="MGI"/>
</dbReference>
<dbReference type="GO" id="GO:0007229">
    <property type="term" value="P:integrin-mediated signaling pathway"/>
    <property type="evidence" value="ECO:0007669"/>
    <property type="project" value="UniProtKB-KW"/>
</dbReference>
<dbReference type="GO" id="GO:0045906">
    <property type="term" value="P:negative regulation of vasoconstriction"/>
    <property type="evidence" value="ECO:0000250"/>
    <property type="project" value="UniProtKB"/>
</dbReference>
<dbReference type="GO" id="GO:0030593">
    <property type="term" value="P:neutrophil chemotaxis"/>
    <property type="evidence" value="ECO:0000316"/>
    <property type="project" value="MGI"/>
</dbReference>
<dbReference type="FunFam" id="2.60.40.1460:FF:000007">
    <property type="entry name" value="Integrin subunit alpha 9"/>
    <property type="match status" value="1"/>
</dbReference>
<dbReference type="FunFam" id="1.20.5.930:FF:000002">
    <property type="entry name" value="Integrin, alpha 9"/>
    <property type="match status" value="1"/>
</dbReference>
<dbReference type="FunFam" id="2.130.10.130:FF:000006">
    <property type="entry name" value="Integrin, alpha 9"/>
    <property type="match status" value="1"/>
</dbReference>
<dbReference type="FunFam" id="2.60.40.1510:FF:000013">
    <property type="entry name" value="Integrin, alpha 9"/>
    <property type="match status" value="1"/>
</dbReference>
<dbReference type="FunFam" id="2.60.40.1530:FF:000005">
    <property type="entry name" value="Integrin, alpha 9"/>
    <property type="match status" value="1"/>
</dbReference>
<dbReference type="Gene3D" id="1.20.5.930">
    <property type="entry name" value="Bicelle-embedded integrin alpha(iib) transmembrane segment"/>
    <property type="match status" value="1"/>
</dbReference>
<dbReference type="Gene3D" id="2.130.10.130">
    <property type="entry name" value="Integrin alpha, N-terminal"/>
    <property type="match status" value="1"/>
</dbReference>
<dbReference type="Gene3D" id="2.60.40.1460">
    <property type="entry name" value="Integrin domains. Chain A, domain 2"/>
    <property type="match status" value="1"/>
</dbReference>
<dbReference type="Gene3D" id="2.60.40.1510">
    <property type="entry name" value="ntegrin, alpha v. Chain A, domain 3"/>
    <property type="match status" value="1"/>
</dbReference>
<dbReference type="Gene3D" id="2.60.40.1530">
    <property type="entry name" value="ntegrin, alpha v. Chain A, domain 4"/>
    <property type="match status" value="1"/>
</dbReference>
<dbReference type="InterPro" id="IPR013517">
    <property type="entry name" value="FG-GAP"/>
</dbReference>
<dbReference type="InterPro" id="IPR013519">
    <property type="entry name" value="Int_alpha_beta-p"/>
</dbReference>
<dbReference type="InterPro" id="IPR000413">
    <property type="entry name" value="Integrin_alpha"/>
</dbReference>
<dbReference type="InterPro" id="IPR018184">
    <property type="entry name" value="Integrin_alpha_C_CS"/>
</dbReference>
<dbReference type="InterPro" id="IPR013649">
    <property type="entry name" value="Integrin_alpha_Ig-like_1"/>
</dbReference>
<dbReference type="InterPro" id="IPR048285">
    <property type="entry name" value="Integrin_alpha_Ig-like_2"/>
</dbReference>
<dbReference type="InterPro" id="IPR048286">
    <property type="entry name" value="Integrin_alpha_Ig-like_3"/>
</dbReference>
<dbReference type="InterPro" id="IPR028994">
    <property type="entry name" value="Integrin_alpha_N"/>
</dbReference>
<dbReference type="InterPro" id="IPR032695">
    <property type="entry name" value="Integrin_dom_sf"/>
</dbReference>
<dbReference type="PANTHER" id="PTHR23220">
    <property type="entry name" value="INTEGRIN ALPHA"/>
    <property type="match status" value="1"/>
</dbReference>
<dbReference type="PANTHER" id="PTHR23220:SF69">
    <property type="entry name" value="INTEGRIN ALPHA-9"/>
    <property type="match status" value="1"/>
</dbReference>
<dbReference type="Pfam" id="PF01839">
    <property type="entry name" value="FG-GAP"/>
    <property type="match status" value="2"/>
</dbReference>
<dbReference type="Pfam" id="PF08441">
    <property type="entry name" value="Integrin_A_Ig_1"/>
    <property type="match status" value="1"/>
</dbReference>
<dbReference type="Pfam" id="PF20805">
    <property type="entry name" value="Integrin_A_Ig_2"/>
    <property type="match status" value="1"/>
</dbReference>
<dbReference type="Pfam" id="PF20806">
    <property type="entry name" value="Integrin_A_Ig_3"/>
    <property type="match status" value="1"/>
</dbReference>
<dbReference type="PRINTS" id="PR01185">
    <property type="entry name" value="INTEGRINA"/>
</dbReference>
<dbReference type="SMART" id="SM00191">
    <property type="entry name" value="Int_alpha"/>
    <property type="match status" value="5"/>
</dbReference>
<dbReference type="SUPFAM" id="SSF69318">
    <property type="entry name" value="Integrin alpha N-terminal domain"/>
    <property type="match status" value="1"/>
</dbReference>
<dbReference type="SUPFAM" id="SSF69179">
    <property type="entry name" value="Integrin domains"/>
    <property type="match status" value="3"/>
</dbReference>
<dbReference type="PROSITE" id="PS51470">
    <property type="entry name" value="FG_GAP"/>
    <property type="match status" value="7"/>
</dbReference>
<dbReference type="PROSITE" id="PS00242">
    <property type="entry name" value="INTEGRIN_ALPHA"/>
    <property type="match status" value="1"/>
</dbReference>
<organism>
    <name type="scientific">Mus musculus</name>
    <name type="common">Mouse</name>
    <dbReference type="NCBI Taxonomy" id="10090"/>
    <lineage>
        <taxon>Eukaryota</taxon>
        <taxon>Metazoa</taxon>
        <taxon>Chordata</taxon>
        <taxon>Craniata</taxon>
        <taxon>Vertebrata</taxon>
        <taxon>Euteleostomi</taxon>
        <taxon>Mammalia</taxon>
        <taxon>Eutheria</taxon>
        <taxon>Euarchontoglires</taxon>
        <taxon>Glires</taxon>
        <taxon>Rodentia</taxon>
        <taxon>Myomorpha</taxon>
        <taxon>Muroidea</taxon>
        <taxon>Muridae</taxon>
        <taxon>Murinae</taxon>
        <taxon>Mus</taxon>
        <taxon>Mus</taxon>
    </lineage>
</organism>
<reference key="1">
    <citation type="journal article" date="2009" name="PLoS Biol.">
        <title>Lineage-specific biology revealed by a finished genome assembly of the mouse.</title>
        <authorList>
            <person name="Church D.M."/>
            <person name="Goodstadt L."/>
            <person name="Hillier L.W."/>
            <person name="Zody M.C."/>
            <person name="Goldstein S."/>
            <person name="She X."/>
            <person name="Bult C.J."/>
            <person name="Agarwala R."/>
            <person name="Cherry J.L."/>
            <person name="DiCuccio M."/>
            <person name="Hlavina W."/>
            <person name="Kapustin Y."/>
            <person name="Meric P."/>
            <person name="Maglott D."/>
            <person name="Birtle Z."/>
            <person name="Marques A.C."/>
            <person name="Graves T."/>
            <person name="Zhou S."/>
            <person name="Teague B."/>
            <person name="Potamousis K."/>
            <person name="Churas C."/>
            <person name="Place M."/>
            <person name="Herschleb J."/>
            <person name="Runnheim R."/>
            <person name="Forrest D."/>
            <person name="Amos-Landgraf J."/>
            <person name="Schwartz D.C."/>
            <person name="Cheng Z."/>
            <person name="Lindblad-Toh K."/>
            <person name="Eichler E.E."/>
            <person name="Ponting C.P."/>
        </authorList>
    </citation>
    <scope>NUCLEOTIDE SEQUENCE [LARGE SCALE GENOMIC DNA]</scope>
    <source>
        <strain>C57BL/6J</strain>
    </source>
</reference>
<reference key="2">
    <citation type="journal article" date="2004" name="Genome Res.">
        <title>The status, quality, and expansion of the NIH full-length cDNA project: the Mammalian Gene Collection (MGC).</title>
        <authorList>
            <consortium name="The MGC Project Team"/>
        </authorList>
    </citation>
    <scope>NUCLEOTIDE SEQUENCE [LARGE SCALE MRNA]</scope>
    <source>
        <tissue>Brain</tissue>
    </source>
</reference>
<reference key="3">
    <citation type="journal article" date="1993" name="J. Cell Biol.">
        <title>Sequence and tissue distribution of the integrin alpha 9 subunit, a novel partner of beta 1 that is widely distributed in epithelia and muscle.</title>
        <authorList>
            <person name="Palmer E.L."/>
            <person name="Rueegg C."/>
            <person name="Ferrando R."/>
            <person name="Pytela R."/>
            <person name="Sheppard D."/>
        </authorList>
    </citation>
    <scope>TISSUE SPECIFICITY</scope>
    <source>
        <tissue>Intestine</tissue>
        <tissue>Lung</tissue>
    </source>
</reference>
<reference key="4">
    <citation type="journal article" date="2002" name="Nature">
        <title>Fibulin-5/DANCE is essential for elastogenesis in vivo.</title>
        <authorList>
            <person name="Nakamura T."/>
            <person name="Lozano P.R."/>
            <person name="Ikeda Y."/>
            <person name="Iwanaga Y."/>
            <person name="Hinek A."/>
            <person name="Minamisawa S."/>
            <person name="Cheng C.F."/>
            <person name="Kobuke K."/>
            <person name="Dalton N."/>
            <person name="Takada Y."/>
            <person name="Tashiro K."/>
            <person name="Ross J."/>
            <person name="Honjo T."/>
            <person name="Chien K.R."/>
        </authorList>
    </citation>
    <scope>INTERACTION WITH FBLN5</scope>
</reference>
<reference key="5">
    <citation type="journal article" date="2010" name="Cell">
        <title>A tissue-specific atlas of mouse protein phosphorylation and expression.</title>
        <authorList>
            <person name="Huttlin E.L."/>
            <person name="Jedrychowski M.P."/>
            <person name="Elias J.E."/>
            <person name="Goswami T."/>
            <person name="Rad R."/>
            <person name="Beausoleil S.A."/>
            <person name="Villen J."/>
            <person name="Haas W."/>
            <person name="Sowa M.E."/>
            <person name="Gygi S.P."/>
        </authorList>
    </citation>
    <scope>IDENTIFICATION BY MASS SPECTROMETRY [LARGE SCALE ANALYSIS]</scope>
    <source>
        <tissue>Heart</tissue>
        <tissue>Lung</tissue>
        <tissue>Spleen</tissue>
        <tissue>Testis</tissue>
    </source>
</reference>
<reference key="6">
    <citation type="journal article" date="2012" name="J. Biol. Chem.">
        <title>Polydom/SVEP1 is a ligand for integrin alpha9beta1.</title>
        <authorList>
            <person name="Sato-Nishiuchi R."/>
            <person name="Nakano I."/>
            <person name="Ozawa A."/>
            <person name="Sato Y."/>
            <person name="Takeichi M."/>
            <person name="Kiyozumi D."/>
            <person name="Yamazaki K."/>
            <person name="Yasunaga T."/>
            <person name="Futaki S."/>
            <person name="Sekiguchi K."/>
        </authorList>
    </citation>
    <scope>FUNCTION</scope>
    <scope>INTERACTION WITH SVEP1; SPP1 AND TNC</scope>
    <scope>DEVELOPMENTAL STAGE</scope>
</reference>
<reference key="7">
    <citation type="journal article" date="2017" name="Circ. Res.">
        <title>An Evolutionarily Conserved Role for Polydom/Svep1 During Lymphatic Vessel Formation.</title>
        <authorList>
            <person name="Karpanen T."/>
            <person name="Padberg Y."/>
            <person name="van de Pavert S.A."/>
            <person name="Dierkes C."/>
            <person name="Morooka N."/>
            <person name="Peterson-Maduro J."/>
            <person name="van de Hoek G."/>
            <person name="Adrian M."/>
            <person name="Mochizuki N."/>
            <person name="Sekiguchi K."/>
            <person name="Kiefer F."/>
            <person name="Schulte D."/>
            <person name="Schulte-Merker S."/>
        </authorList>
    </citation>
    <scope>DEVELOPMENTAL STAGE</scope>
</reference>
<reference key="8">
    <citation type="journal article" date="2017" name="Circ. Res.">
        <title>Polydom Is an Extracellular Matrix Protein Involved in Lymphatic Vessel Remodeling.</title>
        <authorList>
            <person name="Morooka N."/>
            <person name="Futaki S."/>
            <person name="Sato-Nishiuchi R."/>
            <person name="Nishino M."/>
            <person name="Totani Y."/>
            <person name="Shimono C."/>
            <person name="Nakano I."/>
            <person name="Nakajima H."/>
            <person name="Mochizuki N."/>
            <person name="Sekiguchi K."/>
        </authorList>
    </citation>
    <scope>INTERACTION WITH SVEP1</scope>
</reference>
<reference key="9">
    <citation type="journal article" date="2022" name="Br. J. Pharmacol.">
        <title>The integrin ligand SVEP1 regulates GPCR-mediated vasoconstriction via integrins alpha9beta1 and alpha4beta1.</title>
        <authorList>
            <person name="Morris G.E."/>
            <person name="Denniff M.J."/>
            <person name="Karamanavi E."/>
            <person name="Andrews S.A."/>
            <person name="Kostogrys R.B."/>
            <person name="Bountziouka V."/>
            <person name="Ghaderi-Najafabadi M."/>
            <person name="Shamkhi N."/>
            <person name="McConnell G."/>
            <person name="Kaiser M.A."/>
            <person name="Carleton L."/>
            <person name="Schofield C."/>
            <person name="Kessler T."/>
            <person name="Rainbow R.D."/>
            <person name="Samani N.J."/>
            <person name="Webb T.R."/>
        </authorList>
    </citation>
    <scope>FUNCTION</scope>
    <scope>TISSUE SPECIFICITY</scope>
</reference>
<gene>
    <name evidence="14" type="primary">Itga9</name>
</gene>
<protein>
    <recommendedName>
        <fullName evidence="12">Integrin alpha-9</fullName>
    </recommendedName>
</protein>
<keyword id="KW-0106">Calcium</keyword>
<keyword id="KW-0130">Cell adhesion</keyword>
<keyword id="KW-1015">Disulfide bond</keyword>
<keyword id="KW-0325">Glycoprotein</keyword>
<keyword id="KW-0401">Integrin</keyword>
<keyword id="KW-0472">Membrane</keyword>
<keyword id="KW-0479">Metal-binding</keyword>
<keyword id="KW-0675">Receptor</keyword>
<keyword id="KW-1185">Reference proteome</keyword>
<keyword id="KW-0677">Repeat</keyword>
<keyword id="KW-0732">Signal</keyword>
<keyword id="KW-0812">Transmembrane</keyword>
<keyword id="KW-1133">Transmembrane helix</keyword>
<evidence type="ECO:0000250" key="1"/>
<evidence type="ECO:0000250" key="2">
    <source>
        <dbReference type="UniProtKB" id="P08648"/>
    </source>
</evidence>
<evidence type="ECO:0000250" key="3">
    <source>
        <dbReference type="UniProtKB" id="Q13797"/>
    </source>
</evidence>
<evidence type="ECO:0000255" key="4"/>
<evidence type="ECO:0000255" key="5">
    <source>
        <dbReference type="PROSITE-ProRule" id="PRU00803"/>
    </source>
</evidence>
<evidence type="ECO:0000269" key="6">
    <source>
    </source>
</evidence>
<evidence type="ECO:0000269" key="7">
    <source>
    </source>
</evidence>
<evidence type="ECO:0000269" key="8">
    <source>
    </source>
</evidence>
<evidence type="ECO:0000269" key="9">
    <source>
    </source>
</evidence>
<evidence type="ECO:0000269" key="10">
    <source>
    </source>
</evidence>
<evidence type="ECO:0000269" key="11">
    <source>
    </source>
</evidence>
<evidence type="ECO:0000305" key="12"/>
<evidence type="ECO:0000305" key="13">
    <source>
    </source>
</evidence>
<evidence type="ECO:0000312" key="14">
    <source>
        <dbReference type="MGI" id="MGI:104756"/>
    </source>
</evidence>
<feature type="signal peptide" evidence="4">
    <location>
        <begin position="1"/>
        <end position="28"/>
    </location>
</feature>
<feature type="chain" id="PRO_0000431914" description="Integrin alpha-9" evidence="4">
    <location>
        <begin position="29"/>
        <end position="1036"/>
    </location>
</feature>
<feature type="topological domain" description="Extracellular" evidence="12">
    <location>
        <begin position="29"/>
        <end position="981"/>
    </location>
</feature>
<feature type="transmembrane region" description="Helical" evidence="4">
    <location>
        <begin position="982"/>
        <end position="1002"/>
    </location>
</feature>
<feature type="topological domain" description="Cytoplasmic" evidence="12">
    <location>
        <begin position="1003"/>
        <end position="1036"/>
    </location>
</feature>
<feature type="repeat" description="FG-GAP 1" evidence="5">
    <location>
        <begin position="36"/>
        <end position="97"/>
    </location>
</feature>
<feature type="repeat" description="FG-GAP 2" evidence="5">
    <location>
        <begin position="109"/>
        <end position="175"/>
    </location>
</feature>
<feature type="repeat" description="FG-GAP 3" evidence="5">
    <location>
        <begin position="183"/>
        <end position="233"/>
    </location>
</feature>
<feature type="repeat" description="FG-GAP 4" evidence="5">
    <location>
        <begin position="234"/>
        <end position="290"/>
    </location>
</feature>
<feature type="repeat" description="FG-GAP 5" evidence="5">
    <location>
        <begin position="291"/>
        <end position="350"/>
    </location>
</feature>
<feature type="repeat" description="FG-GAP 6" evidence="5">
    <location>
        <begin position="352"/>
        <end position="409"/>
    </location>
</feature>
<feature type="repeat" description="FG-GAP 7" evidence="5">
    <location>
        <begin position="412"/>
        <end position="475"/>
    </location>
</feature>
<feature type="short sequence motif" description="GFFKR motif" evidence="3">
    <location>
        <begin position="1006"/>
        <end position="1010"/>
    </location>
</feature>
<feature type="binding site" evidence="2">
    <location>
        <position position="313"/>
    </location>
    <ligand>
        <name>Ca(2+)</name>
        <dbReference type="ChEBI" id="CHEBI:29108"/>
        <label>1</label>
    </ligand>
</feature>
<feature type="binding site" evidence="2">
    <location>
        <position position="315"/>
    </location>
    <ligand>
        <name>Ca(2+)</name>
        <dbReference type="ChEBI" id="CHEBI:29108"/>
        <label>1</label>
    </ligand>
</feature>
<feature type="binding site" evidence="2">
    <location>
        <position position="317"/>
    </location>
    <ligand>
        <name>Ca(2+)</name>
        <dbReference type="ChEBI" id="CHEBI:29108"/>
        <label>1</label>
    </ligand>
</feature>
<feature type="binding site" evidence="2">
    <location>
        <position position="321"/>
    </location>
    <ligand>
        <name>Ca(2+)</name>
        <dbReference type="ChEBI" id="CHEBI:29108"/>
        <label>1</label>
    </ligand>
</feature>
<feature type="binding site" evidence="2">
    <location>
        <position position="374"/>
    </location>
    <ligand>
        <name>Ca(2+)</name>
        <dbReference type="ChEBI" id="CHEBI:29108"/>
        <label>2</label>
    </ligand>
</feature>
<feature type="binding site" evidence="2">
    <location>
        <position position="376"/>
    </location>
    <ligand>
        <name>Ca(2+)</name>
        <dbReference type="ChEBI" id="CHEBI:29108"/>
        <label>2</label>
    </ligand>
</feature>
<feature type="binding site" evidence="2">
    <location>
        <position position="378"/>
    </location>
    <ligand>
        <name>Ca(2+)</name>
        <dbReference type="ChEBI" id="CHEBI:29108"/>
        <label>2</label>
    </ligand>
</feature>
<feature type="binding site" evidence="2">
    <location>
        <position position="382"/>
    </location>
    <ligand>
        <name>Ca(2+)</name>
        <dbReference type="ChEBI" id="CHEBI:29108"/>
        <label>2</label>
    </ligand>
</feature>
<feature type="binding site" evidence="2">
    <location>
        <position position="436"/>
    </location>
    <ligand>
        <name>Ca(2+)</name>
        <dbReference type="ChEBI" id="CHEBI:29108"/>
        <label>3</label>
    </ligand>
</feature>
<feature type="binding site" evidence="2">
    <location>
        <position position="438"/>
    </location>
    <ligand>
        <name>Ca(2+)</name>
        <dbReference type="ChEBI" id="CHEBI:29108"/>
        <label>3</label>
    </ligand>
</feature>
<feature type="binding site" evidence="2">
    <location>
        <position position="440"/>
    </location>
    <ligand>
        <name>Ca(2+)</name>
        <dbReference type="ChEBI" id="CHEBI:29108"/>
        <label>3</label>
    </ligand>
</feature>
<feature type="binding site" evidence="2">
    <location>
        <position position="444"/>
    </location>
    <ligand>
        <name>Ca(2+)</name>
        <dbReference type="ChEBI" id="CHEBI:29108"/>
        <label>3</label>
    </ligand>
</feature>
<feature type="site" description="Cleavage" evidence="4">
    <location>
        <begin position="566"/>
        <end position="567"/>
    </location>
</feature>
<feature type="glycosylation site" description="N-linked (GlcNAc...) asparagine" evidence="4">
    <location>
        <position position="226"/>
    </location>
</feature>
<feature type="glycosylation site" description="N-linked (GlcNAc...) asparagine" evidence="4">
    <location>
        <position position="494"/>
    </location>
</feature>
<feature type="glycosylation site" description="N-linked (GlcNAc...) asparagine" evidence="4">
    <location>
        <position position="515"/>
    </location>
</feature>
<feature type="glycosylation site" description="N-linked (GlcNAc...) asparagine" evidence="4">
    <location>
        <position position="808"/>
    </location>
</feature>
<feature type="disulfide bond" evidence="1">
    <location>
        <begin position="88"/>
        <end position="98"/>
    </location>
</feature>
<feature type="disulfide bond" evidence="1">
    <location>
        <begin position="143"/>
        <end position="163"/>
    </location>
</feature>
<feature type="disulfide bond" evidence="1">
    <location>
        <begin position="180"/>
        <end position="195"/>
    </location>
</feature>
<feature type="disulfide bond" evidence="1">
    <location>
        <begin position="483"/>
        <end position="492"/>
    </location>
</feature>
<feature type="disulfide bond" evidence="1">
    <location>
        <begin position="498"/>
        <end position="556"/>
    </location>
</feature>
<feature type="disulfide bond" evidence="1">
    <location>
        <begin position="621"/>
        <end position="626"/>
    </location>
</feature>
<feature type="disulfide bond" evidence="1">
    <location>
        <begin position="697"/>
        <end position="707"/>
    </location>
</feature>
<feature type="disulfide bond" evidence="1">
    <location>
        <begin position="856"/>
        <end position="892"/>
    </location>
</feature>
<feature type="disulfide bond" evidence="1">
    <location>
        <begin position="899"/>
        <end position="904"/>
    </location>
</feature>
<feature type="sequence conflict" description="In Ref. 2; AAI50825." evidence="12" ref="2">
    <original>I</original>
    <variation>V</variation>
    <location>
        <position position="291"/>
    </location>
</feature>
<feature type="sequence conflict" description="In Ref. 2; AAI50825." evidence="12" ref="2">
    <original>N</original>
    <variation>D</variation>
    <location>
        <position position="918"/>
    </location>
</feature>
<name>ITA9_MOUSE</name>
<sequence>MGGPAAARTGAGGLRALLLALVAAGVPAGAYNLDAQRPVRFQGPSGSFFGYAVLEHFHDNTRWVLVGAPKADSKYSTSVKSPGAVFKCRVHTNPDRRCTELDMARGRTRGAPCGKTCRGDRDDEWMGVSLARQPRADGRVLACAHRWKNIYYEADHILPHGFCYLIPSNLQAKGKVLIPCYEEYKKKYGEEHGSCQAGIAGFFTEELVVMGAPGSFYWAGTLKVLNLTDNTYFKLNDEAIMNRRYTYLGYAVTAGHFSHPSITDVVGGAPQDEGIGKVYIFRADRRSGTLIKIFQASGKKMGSYFGSSLCAVDLNMDGLSDLLVGAPMFSEIRDEGQVTVYLNQGHGALEEQLTLTGDAAYNAHFGESIANLGDIDDDGFPDVAVGAPKEEDFAGAVYIYHGDANGIVPKYSMKLSGRRLNPTLRMFGQSISGGIDMDGNGYPDVTIGAFLSDSVVLLRARPVITVDVSIFLPGSINITAPQCHDGQQPVNCLNVTVCFRFHGKNVPGEIGLNYNLTADVAQKEKGQLPRVYFVLFGETAGQVSERLQLSHMDEVCHHYVAHVKRRVQDVISPIVFEAAYSLDEHVMGEEDRELPDLTPVLRWKKGQRISQKNQTVFERNCQSEDCAADLQLRGKLLLSSVDEKTPHLALGAVKNISLNISISNLGDDAYDANVSFNVSRELFFINMWQKEEMGISCELLESDFLKCSVGFPFMRSKSKYEFSVIFDTSHLSGEEEILSFIVTAQSGNLERSEALHDNTLTLTVPLVHEVDTSITGIVSPTSFVYGESVDASNFIQLDDQECHFQPVNITLQVYNMGPSTLPGSSVSISFPSRLSPGGAEMFQVQDMVVSQEKGNCSLQRNPTPCIIPQEQENIFHTIFAFFSKSGRKVLDCEKPGSFCLTLHCNLSALPKEESRTINLYMLLNTEILKKDSSSVIQFMARAKVKVEPALRVVEIANGNPEETLVVFEALHNLEPRGYVVGWIIAISLLVGILIFLLLAVLLWKMGFFRRRYKEIIEAEKNRKENEDGWDWVQKNQ</sequence>
<comment type="function">
    <text evidence="1 7 10">Integrin alpha-9/beta-1 (ITGA9:ITGB1) is a receptor for VCAM1, cytotactin and osteopontin. It recognizes the sequence A-E-I-D-G-I-E-L in cytotactin. ITGA9:ITGB1 may play a crucial role in SVEP1/polydom-mediated myoblast cell adhesion (PubMed:22654117). Integrin ITGA9:ITGB1 represses PRKCA-mediated L-type voltage-gated channel Ca(2+) influx and ROCK-mediated calcium sensitivity in vascular smooth muscle cells via its interaction with SVEP1, thereby inhibiting vasocontraction (PubMed:35802072).</text>
</comment>
<comment type="subunit">
    <text evidence="6 7 8 13">Heterodimer of an alpha and a beta subunit. Alpha-9 (ITGA9) associates with beta-1 (ITGB1) (Probable). Integrin ITGA9:ITGB1 interacts with FBLN5 (via N-terminus) (PubMed:11805835). Integrin ITGA9:ITGB1 interacts with SPP1/OPN (via N-terminus) (PubMed:22654117). Integrin ITGA9:ITGB1 interacts with TNC/TNFN3 (via the 3rd Fibronectin type-III domain) (PubMed:22654117). Integrin ITGA9:ITGB1 interacts with SVEP1/polydom (via Sushi domain 21); thereby inhibits Ca(2+) intracellular signaling and as a result represses vasocontraction (PubMed:22654117, PubMed:28179430).</text>
</comment>
<comment type="subcellular location">
    <subcellularLocation>
        <location evidence="4">Membrane</location>
        <topology evidence="4">Single-pass type I membrane protein</topology>
    </subcellularLocation>
</comment>
<comment type="tissue specificity">
    <text evidence="10 11">Expressed in the media layer of the arterial wall (at protein level) (PubMed:35802072). Expressed in the airway epithelium, skeletal muscle, basal keratincytes, the basal epithelium of the cornea, hepatocytes, giant cells in the spleen and smooth muscle of the stomach, duodenum and veins (at protein level) (PubMed:8245132).</text>
</comment>
<comment type="developmental stage">
    <text evidence="7 9">Expressed at the submucosal mesenchyme and smooth muscle layer in the stomach and intestine at 16.5 dpc (at protein level) (PubMed:22654117). Expressed in the sinusoids in the liver, and Bowmans capsules and inter-renal tubule mesenchyme at 16.5 dpc (at protein level) (PubMed:22654117). Abundantly expressed in the smooth muscle layer of the lung at 16.5 dpc (at protein level) (PubMed:22654117). Abundantly expressed in the smooth muscle layer surrounding the trachea at 16.5 dpc (at protein level) (PubMed:22654117). Expressed in the mesentery lymphatic vessel and nerve at 18.5 dpc (at protein level) (PubMed:28179432).</text>
</comment>
<comment type="similarity">
    <text evidence="12">Belongs to the integrin alpha chain family.</text>
</comment>
<proteinExistence type="evidence at protein level"/>
<accession>B8JK39</accession>
<accession>B9EKC4</accession>